<comment type="function">
    <text evidence="1">Putative tyrosine recombinase. Not involved in the cutting and rejoining of the recombining DNA molecules on dif(SL) site.</text>
</comment>
<comment type="subcellular location">
    <subcellularLocation>
        <location evidence="1">Cytoplasm</location>
    </subcellularLocation>
</comment>
<comment type="similarity">
    <text evidence="1">Belongs to the 'phage' integrase family. XerD-like subfamily.</text>
</comment>
<comment type="sequence caution" evidence="4">
    <conflict type="erroneous initiation">
        <sequence resource="EMBL-CDS" id="ACA35610"/>
    </conflict>
</comment>
<dbReference type="EMBL" id="CP000936">
    <property type="protein sequence ID" value="ACA35610.1"/>
    <property type="status" value="ALT_INIT"/>
    <property type="molecule type" value="Genomic_DNA"/>
</dbReference>
<dbReference type="SMR" id="B1I887"/>
<dbReference type="KEGG" id="spv:SPH_1993"/>
<dbReference type="HOGENOM" id="CLU_1128554_0_0_9"/>
<dbReference type="Proteomes" id="UP000002163">
    <property type="component" value="Chromosome"/>
</dbReference>
<dbReference type="GO" id="GO:0005737">
    <property type="term" value="C:cytoplasm"/>
    <property type="evidence" value="ECO:0007669"/>
    <property type="project" value="UniProtKB-SubCell"/>
</dbReference>
<dbReference type="GO" id="GO:0003677">
    <property type="term" value="F:DNA binding"/>
    <property type="evidence" value="ECO:0007669"/>
    <property type="project" value="UniProtKB-KW"/>
</dbReference>
<dbReference type="GO" id="GO:0009037">
    <property type="term" value="F:tyrosine-based site-specific recombinase activity"/>
    <property type="evidence" value="ECO:0007669"/>
    <property type="project" value="UniProtKB-UniRule"/>
</dbReference>
<dbReference type="GO" id="GO:0006313">
    <property type="term" value="P:DNA transposition"/>
    <property type="evidence" value="ECO:0007669"/>
    <property type="project" value="UniProtKB-UniRule"/>
</dbReference>
<dbReference type="CDD" id="cd01190">
    <property type="entry name" value="INT_StrepXerD_C_like"/>
    <property type="match status" value="1"/>
</dbReference>
<dbReference type="Gene3D" id="1.10.150.130">
    <property type="match status" value="1"/>
</dbReference>
<dbReference type="Gene3D" id="1.10.443.10">
    <property type="entry name" value="Intergrase catalytic core"/>
    <property type="match status" value="1"/>
</dbReference>
<dbReference type="HAMAP" id="MF_01817">
    <property type="entry name" value="Recomb_XerD_like"/>
    <property type="match status" value="1"/>
</dbReference>
<dbReference type="InterPro" id="IPR044068">
    <property type="entry name" value="CB"/>
</dbReference>
<dbReference type="InterPro" id="IPR011010">
    <property type="entry name" value="DNA_brk_join_enz"/>
</dbReference>
<dbReference type="InterPro" id="IPR013762">
    <property type="entry name" value="Integrase-like_cat_sf"/>
</dbReference>
<dbReference type="InterPro" id="IPR002104">
    <property type="entry name" value="Integrase_catalytic"/>
</dbReference>
<dbReference type="InterPro" id="IPR010998">
    <property type="entry name" value="Integrase_recombinase_N"/>
</dbReference>
<dbReference type="InterPro" id="IPR004107">
    <property type="entry name" value="Integrase_SAM-like_N"/>
</dbReference>
<dbReference type="InterPro" id="IPR020876">
    <property type="entry name" value="Tyrosine_recombinase_XerD-like"/>
</dbReference>
<dbReference type="NCBIfam" id="NF002685">
    <property type="entry name" value="PRK02436.1"/>
    <property type="match status" value="1"/>
</dbReference>
<dbReference type="Pfam" id="PF02899">
    <property type="entry name" value="Phage_int_SAM_1"/>
    <property type="match status" value="1"/>
</dbReference>
<dbReference type="Pfam" id="PF00589">
    <property type="entry name" value="Phage_integrase"/>
    <property type="match status" value="1"/>
</dbReference>
<dbReference type="SUPFAM" id="SSF56349">
    <property type="entry name" value="DNA breaking-rejoining enzymes"/>
    <property type="match status" value="1"/>
</dbReference>
<dbReference type="PROSITE" id="PS51900">
    <property type="entry name" value="CB"/>
    <property type="match status" value="1"/>
</dbReference>
<dbReference type="PROSITE" id="PS51898">
    <property type="entry name" value="TYR_RECOMBINASE"/>
    <property type="match status" value="1"/>
</dbReference>
<gene>
    <name type="ordered locus">SPH_1993</name>
</gene>
<name>XERDL_STRPI</name>
<feature type="chain" id="PRO_0000355192" description="Tyrosine recombinase XerD-like">
    <location>
        <begin position="1"/>
        <end position="244"/>
    </location>
</feature>
<feature type="domain" description="Core-binding (CB)" evidence="3">
    <location>
        <begin position="1"/>
        <end position="73"/>
    </location>
</feature>
<feature type="domain" description="Tyr recombinase" evidence="2">
    <location>
        <begin position="90"/>
        <end position="244"/>
    </location>
</feature>
<feature type="active site" evidence="2">
    <location>
        <position position="150"/>
    </location>
</feature>
<feature type="active site" evidence="2">
    <location>
        <position position="211"/>
    </location>
</feature>
<feature type="active site" description="O-(3'-phospho-DNA)-tyrosine intermediate" evidence="2">
    <location>
        <position position="243"/>
    </location>
</feature>
<keyword id="KW-0963">Cytoplasm</keyword>
<keyword id="KW-0229">DNA integration</keyword>
<keyword id="KW-0233">DNA recombination</keyword>
<keyword id="KW-0238">DNA-binding</keyword>
<accession>B1I887</accession>
<protein>
    <recommendedName>
        <fullName evidence="1">Tyrosine recombinase XerD-like</fullName>
    </recommendedName>
</protein>
<organism>
    <name type="scientific">Streptococcus pneumoniae (strain Hungary19A-6)</name>
    <dbReference type="NCBI Taxonomy" id="487214"/>
    <lineage>
        <taxon>Bacteria</taxon>
        <taxon>Bacillati</taxon>
        <taxon>Bacillota</taxon>
        <taxon>Bacilli</taxon>
        <taxon>Lactobacillales</taxon>
        <taxon>Streptococcaceae</taxon>
        <taxon>Streptococcus</taxon>
    </lineage>
</organism>
<reference key="1">
    <citation type="journal article" date="2010" name="Genome Biol.">
        <title>Structure and dynamics of the pan-genome of Streptococcus pneumoniae and closely related species.</title>
        <authorList>
            <person name="Donati C."/>
            <person name="Hiller N.L."/>
            <person name="Tettelin H."/>
            <person name="Muzzi A."/>
            <person name="Croucher N.J."/>
            <person name="Angiuoli S.V."/>
            <person name="Oggioni M."/>
            <person name="Dunning Hotopp J.C."/>
            <person name="Hu F.Z."/>
            <person name="Riley D.R."/>
            <person name="Covacci A."/>
            <person name="Mitchell T.J."/>
            <person name="Bentley S.D."/>
            <person name="Kilian M."/>
            <person name="Ehrlich G.D."/>
            <person name="Rappuoli R."/>
            <person name="Moxon E.R."/>
            <person name="Masignani V."/>
        </authorList>
    </citation>
    <scope>NUCLEOTIDE SEQUENCE [LARGE SCALE GENOMIC DNA]</scope>
    <source>
        <strain>Hungary19A-6</strain>
    </source>
</reference>
<sequence>MRDRISAFLEEKQGLSVNSKQSYKYDLEQFLDMVGERISETSLKIYQAQLANLKISAQKRKISACNQFLYFLYQKGEVDSFYRLELAKQAEKKTEKPEILYLDSFWQESDHPEGRLLALLILEMGLLPSEILAIKVADINLDFQVLRISKASQRRIVTIPTALLSELEPLMGQTYLFERGGKPYSRQWAFRQLESFVKEKGFPSLSAQVLREQFILRQIENKVDLYEIAKKLGLKTVLTLEKYR</sequence>
<evidence type="ECO:0000255" key="1">
    <source>
        <dbReference type="HAMAP-Rule" id="MF_01817"/>
    </source>
</evidence>
<evidence type="ECO:0000255" key="2">
    <source>
        <dbReference type="PROSITE-ProRule" id="PRU01246"/>
    </source>
</evidence>
<evidence type="ECO:0000255" key="3">
    <source>
        <dbReference type="PROSITE-ProRule" id="PRU01248"/>
    </source>
</evidence>
<evidence type="ECO:0000305" key="4"/>
<proteinExistence type="inferred from homology"/>